<keyword id="KW-0472">Membrane</keyword>
<keyword id="KW-1185">Reference proteome</keyword>
<keyword id="KW-0812">Transmembrane</keyword>
<keyword id="KW-1133">Transmembrane helix</keyword>
<name>Y648_MYCPN</name>
<organism>
    <name type="scientific">Mycoplasma pneumoniae (strain ATCC 29342 / M129 / Subtype 1)</name>
    <name type="common">Mycoplasmoides pneumoniae</name>
    <dbReference type="NCBI Taxonomy" id="272634"/>
    <lineage>
        <taxon>Bacteria</taxon>
        <taxon>Bacillati</taxon>
        <taxon>Mycoplasmatota</taxon>
        <taxon>Mycoplasmoidales</taxon>
        <taxon>Mycoplasmoidaceae</taxon>
        <taxon>Mycoplasmoides</taxon>
    </lineage>
</organism>
<protein>
    <recommendedName>
        <fullName>Uncharacterized protein MG441 homolog</fullName>
    </recommendedName>
</protein>
<accession>P75149</accession>
<evidence type="ECO:0000255" key="1"/>
<evidence type="ECO:0000305" key="2"/>
<gene>
    <name type="ordered locus">MPN_648</name>
    <name type="ORF">E09_orf136</name>
    <name type="ORF">MP194</name>
</gene>
<sequence length="136" mass="16157">MKSQFKANVLAILLVSLFLINGLVFLSKTLFKLFNFRVTHSLNNYYTFNLLIKAWRSIKNDFSSLNNFVFFIERQVHNFIGLLIEQPSIEEDNQPEVIEETPKLEIVVVIEKEVINSKLSDYFCFFKYRSLFFELR</sequence>
<comment type="subcellular location">
    <subcellularLocation>
        <location evidence="2">Membrane</location>
        <topology evidence="2">Single-pass membrane protein</topology>
    </subcellularLocation>
</comment>
<reference key="1">
    <citation type="journal article" date="1996" name="Nucleic Acids Res.">
        <title>Complete sequence analysis of the genome of the bacterium Mycoplasma pneumoniae.</title>
        <authorList>
            <person name="Himmelreich R."/>
            <person name="Hilbert H."/>
            <person name="Plagens H."/>
            <person name="Pirkl E."/>
            <person name="Li B.-C."/>
            <person name="Herrmann R."/>
        </authorList>
    </citation>
    <scope>NUCLEOTIDE SEQUENCE [LARGE SCALE GENOMIC DNA]</scope>
    <source>
        <strain>ATCC 29342 / M129 / Subtype 1</strain>
    </source>
</reference>
<feature type="chain" id="PRO_0000210613" description="Uncharacterized protein MG441 homolog">
    <location>
        <begin position="1"/>
        <end position="136"/>
    </location>
</feature>
<feature type="transmembrane region" description="Helical" evidence="1">
    <location>
        <begin position="7"/>
        <end position="27"/>
    </location>
</feature>
<dbReference type="EMBL" id="U00089">
    <property type="protein sequence ID" value="AAB95842.1"/>
    <property type="molecule type" value="Genomic_DNA"/>
</dbReference>
<dbReference type="PIR" id="S73520">
    <property type="entry name" value="S73520"/>
</dbReference>
<dbReference type="RefSeq" id="NP_110337.1">
    <property type="nucleotide sequence ID" value="NC_000912.1"/>
</dbReference>
<dbReference type="RefSeq" id="WP_010875005.1">
    <property type="nucleotide sequence ID" value="NZ_OU342337.1"/>
</dbReference>
<dbReference type="SMR" id="P75149"/>
<dbReference type="STRING" id="272634.MPN_648"/>
<dbReference type="EnsemblBacteria" id="AAB95842">
    <property type="protein sequence ID" value="AAB95842"/>
    <property type="gene ID" value="MPN_648"/>
</dbReference>
<dbReference type="KEGG" id="mpn:MPN_648"/>
<dbReference type="PATRIC" id="fig|272634.6.peg.711"/>
<dbReference type="HOGENOM" id="CLU_1873153_0_0_14"/>
<dbReference type="OrthoDB" id="10014778at2"/>
<dbReference type="BioCyc" id="MPNE272634:G1GJ3-1033-MONOMER"/>
<dbReference type="Proteomes" id="UP000000808">
    <property type="component" value="Chromosome"/>
</dbReference>
<dbReference type="GO" id="GO:0016020">
    <property type="term" value="C:membrane"/>
    <property type="evidence" value="ECO:0007669"/>
    <property type="project" value="UniProtKB-SubCell"/>
</dbReference>
<dbReference type="InterPro" id="IPR035339">
    <property type="entry name" value="DUF5426"/>
</dbReference>
<dbReference type="Pfam" id="PF17473">
    <property type="entry name" value="DUF5426"/>
    <property type="match status" value="1"/>
</dbReference>
<proteinExistence type="predicted"/>